<evidence type="ECO:0000255" key="1">
    <source>
        <dbReference type="HAMAP-Rule" id="MF_00434"/>
    </source>
</evidence>
<organism>
    <name type="scientific">Chelativorans sp. (strain BNC1)</name>
    <dbReference type="NCBI Taxonomy" id="266779"/>
    <lineage>
        <taxon>Bacteria</taxon>
        <taxon>Pseudomonadati</taxon>
        <taxon>Pseudomonadota</taxon>
        <taxon>Alphaproteobacteria</taxon>
        <taxon>Hyphomicrobiales</taxon>
        <taxon>Phyllobacteriaceae</taxon>
        <taxon>Chelativorans</taxon>
    </lineage>
</organism>
<name>PHS_CHESB</name>
<sequence length="98" mass="11115">MARQKLDRKEIENGLSELDEWELAEGGNAIHRRFVFSNFNEAFGFMTRAALAAEKLDHHPEWTNVYKTVDVTLTTHASGGLTELDFKLAKKMNAYAAK</sequence>
<reference key="1">
    <citation type="submission" date="2006-06" db="EMBL/GenBank/DDBJ databases">
        <title>Complete sequence of chromosome of Mesorhizobium sp. BNC1.</title>
        <authorList>
            <consortium name="US DOE Joint Genome Institute"/>
            <person name="Copeland A."/>
            <person name="Lucas S."/>
            <person name="Lapidus A."/>
            <person name="Barry K."/>
            <person name="Detter J.C."/>
            <person name="Glavina del Rio T."/>
            <person name="Hammon N."/>
            <person name="Israni S."/>
            <person name="Dalin E."/>
            <person name="Tice H."/>
            <person name="Pitluck S."/>
            <person name="Chertkov O."/>
            <person name="Brettin T."/>
            <person name="Bruce D."/>
            <person name="Han C."/>
            <person name="Tapia R."/>
            <person name="Gilna P."/>
            <person name="Schmutz J."/>
            <person name="Larimer F."/>
            <person name="Land M."/>
            <person name="Hauser L."/>
            <person name="Kyrpides N."/>
            <person name="Mikhailova N."/>
            <person name="Richardson P."/>
        </authorList>
    </citation>
    <scope>NUCLEOTIDE SEQUENCE [LARGE SCALE GENOMIC DNA]</scope>
    <source>
        <strain>BNC1</strain>
    </source>
</reference>
<comment type="catalytic activity">
    <reaction evidence="1">
        <text>(4aS,6R)-4a-hydroxy-L-erythro-5,6,7,8-tetrahydrobiopterin = (6R)-L-erythro-6,7-dihydrobiopterin + H2O</text>
        <dbReference type="Rhea" id="RHEA:11920"/>
        <dbReference type="ChEBI" id="CHEBI:15377"/>
        <dbReference type="ChEBI" id="CHEBI:15642"/>
        <dbReference type="ChEBI" id="CHEBI:43120"/>
        <dbReference type="EC" id="4.2.1.96"/>
    </reaction>
</comment>
<comment type="similarity">
    <text evidence="1">Belongs to the pterin-4-alpha-carbinolamine dehydratase family.</text>
</comment>
<accession>Q11D07</accession>
<protein>
    <recommendedName>
        <fullName evidence="1">Putative pterin-4-alpha-carbinolamine dehydratase</fullName>
        <shortName evidence="1">PHS</shortName>
        <ecNumber evidence="1">4.2.1.96</ecNumber>
    </recommendedName>
    <alternativeName>
        <fullName evidence="1">4-alpha-hydroxy-tetrahydropterin dehydratase</fullName>
    </alternativeName>
    <alternativeName>
        <fullName evidence="1">Pterin carbinolamine dehydratase</fullName>
        <shortName evidence="1">PCD</shortName>
    </alternativeName>
</protein>
<proteinExistence type="inferred from homology"/>
<dbReference type="EC" id="4.2.1.96" evidence="1"/>
<dbReference type="EMBL" id="CP000390">
    <property type="protein sequence ID" value="ABG64718.1"/>
    <property type="molecule type" value="Genomic_DNA"/>
</dbReference>
<dbReference type="SMR" id="Q11D07"/>
<dbReference type="STRING" id="266779.Meso_3347"/>
<dbReference type="KEGG" id="mes:Meso_3347"/>
<dbReference type="eggNOG" id="COG2154">
    <property type="taxonomic scope" value="Bacteria"/>
</dbReference>
<dbReference type="HOGENOM" id="CLU_081974_3_2_5"/>
<dbReference type="OrthoDB" id="9794987at2"/>
<dbReference type="GO" id="GO:0008124">
    <property type="term" value="F:4-alpha-hydroxytetrahydrobiopterin dehydratase activity"/>
    <property type="evidence" value="ECO:0007669"/>
    <property type="project" value="UniProtKB-UniRule"/>
</dbReference>
<dbReference type="GO" id="GO:0006729">
    <property type="term" value="P:tetrahydrobiopterin biosynthetic process"/>
    <property type="evidence" value="ECO:0007669"/>
    <property type="project" value="InterPro"/>
</dbReference>
<dbReference type="CDD" id="cd00914">
    <property type="entry name" value="PCD_DCoH_subfamily_b"/>
    <property type="match status" value="1"/>
</dbReference>
<dbReference type="Gene3D" id="3.30.1360.20">
    <property type="entry name" value="Transcriptional coactivator/pterin dehydratase"/>
    <property type="match status" value="1"/>
</dbReference>
<dbReference type="HAMAP" id="MF_00434">
    <property type="entry name" value="Pterin_4_alpha"/>
    <property type="match status" value="1"/>
</dbReference>
<dbReference type="InterPro" id="IPR036428">
    <property type="entry name" value="PCD_sf"/>
</dbReference>
<dbReference type="InterPro" id="IPR001533">
    <property type="entry name" value="Pterin_deHydtase"/>
</dbReference>
<dbReference type="NCBIfam" id="NF002017">
    <property type="entry name" value="PRK00823.1-2"/>
    <property type="match status" value="1"/>
</dbReference>
<dbReference type="NCBIfam" id="NF002018">
    <property type="entry name" value="PRK00823.1-3"/>
    <property type="match status" value="1"/>
</dbReference>
<dbReference type="PANTHER" id="PTHR12599">
    <property type="entry name" value="PTERIN-4-ALPHA-CARBINOLAMINE DEHYDRATASE"/>
    <property type="match status" value="1"/>
</dbReference>
<dbReference type="PANTHER" id="PTHR12599:SF0">
    <property type="entry name" value="PTERIN-4-ALPHA-CARBINOLAMINE DEHYDRATASE"/>
    <property type="match status" value="1"/>
</dbReference>
<dbReference type="Pfam" id="PF01329">
    <property type="entry name" value="Pterin_4a"/>
    <property type="match status" value="1"/>
</dbReference>
<dbReference type="SUPFAM" id="SSF55248">
    <property type="entry name" value="PCD-like"/>
    <property type="match status" value="1"/>
</dbReference>
<feature type="chain" id="PRO_1000050419" description="Putative pterin-4-alpha-carbinolamine dehydratase">
    <location>
        <begin position="1"/>
        <end position="98"/>
    </location>
</feature>
<keyword id="KW-0456">Lyase</keyword>
<gene>
    <name type="ordered locus">Meso_3347</name>
</gene>